<feature type="chain" id="PRO_0000322763" description="LexA repressor">
    <location>
        <begin position="1"/>
        <end position="207"/>
    </location>
</feature>
<feature type="DNA-binding region" description="H-T-H motif" evidence="1">
    <location>
        <begin position="28"/>
        <end position="48"/>
    </location>
</feature>
<feature type="active site" description="For autocatalytic cleavage activity" evidence="1">
    <location>
        <position position="130"/>
    </location>
</feature>
<feature type="active site" description="For autocatalytic cleavage activity" evidence="1">
    <location>
        <position position="168"/>
    </location>
</feature>
<feature type="site" description="Cleavage; by autolysis" evidence="1">
    <location>
        <begin position="93"/>
        <end position="94"/>
    </location>
</feature>
<evidence type="ECO:0000255" key="1">
    <source>
        <dbReference type="HAMAP-Rule" id="MF_00015"/>
    </source>
</evidence>
<gene>
    <name evidence="1" type="primary">lexA</name>
    <name type="ordered locus">NWMN_1251</name>
</gene>
<reference key="1">
    <citation type="journal article" date="2008" name="J. Bacteriol.">
        <title>Genome sequence of Staphylococcus aureus strain Newman and comparative analysis of staphylococcal genomes: polymorphism and evolution of two major pathogenicity islands.</title>
        <authorList>
            <person name="Baba T."/>
            <person name="Bae T."/>
            <person name="Schneewind O."/>
            <person name="Takeuchi F."/>
            <person name="Hiramatsu K."/>
        </authorList>
    </citation>
    <scope>NUCLEOTIDE SEQUENCE [LARGE SCALE GENOMIC DNA]</scope>
    <source>
        <strain>Newman</strain>
    </source>
</reference>
<dbReference type="EC" id="3.4.21.88" evidence="1"/>
<dbReference type="EMBL" id="AP009351">
    <property type="protein sequence ID" value="BAF67523.1"/>
    <property type="molecule type" value="Genomic_DNA"/>
</dbReference>
<dbReference type="RefSeq" id="WP_001208759.1">
    <property type="nucleotide sequence ID" value="NC_009641.1"/>
</dbReference>
<dbReference type="SMR" id="A6QGP1"/>
<dbReference type="MEROPS" id="S24.001"/>
<dbReference type="KEGG" id="sae:NWMN_1251"/>
<dbReference type="HOGENOM" id="CLU_066192_45_1_9"/>
<dbReference type="Proteomes" id="UP000006386">
    <property type="component" value="Chromosome"/>
</dbReference>
<dbReference type="GO" id="GO:0003677">
    <property type="term" value="F:DNA binding"/>
    <property type="evidence" value="ECO:0007669"/>
    <property type="project" value="UniProtKB-UniRule"/>
</dbReference>
<dbReference type="GO" id="GO:0004252">
    <property type="term" value="F:serine-type endopeptidase activity"/>
    <property type="evidence" value="ECO:0007669"/>
    <property type="project" value="UniProtKB-UniRule"/>
</dbReference>
<dbReference type="GO" id="GO:0006281">
    <property type="term" value="P:DNA repair"/>
    <property type="evidence" value="ECO:0007669"/>
    <property type="project" value="UniProtKB-UniRule"/>
</dbReference>
<dbReference type="GO" id="GO:0006260">
    <property type="term" value="P:DNA replication"/>
    <property type="evidence" value="ECO:0007669"/>
    <property type="project" value="UniProtKB-UniRule"/>
</dbReference>
<dbReference type="GO" id="GO:0045892">
    <property type="term" value="P:negative regulation of DNA-templated transcription"/>
    <property type="evidence" value="ECO:0007669"/>
    <property type="project" value="UniProtKB-UniRule"/>
</dbReference>
<dbReference type="GO" id="GO:0006508">
    <property type="term" value="P:proteolysis"/>
    <property type="evidence" value="ECO:0007669"/>
    <property type="project" value="InterPro"/>
</dbReference>
<dbReference type="GO" id="GO:0009432">
    <property type="term" value="P:SOS response"/>
    <property type="evidence" value="ECO:0007669"/>
    <property type="project" value="UniProtKB-UniRule"/>
</dbReference>
<dbReference type="CDD" id="cd00090">
    <property type="entry name" value="HTH_ARSR"/>
    <property type="match status" value="1"/>
</dbReference>
<dbReference type="CDD" id="cd06529">
    <property type="entry name" value="S24_LexA-like"/>
    <property type="match status" value="1"/>
</dbReference>
<dbReference type="FunFam" id="1.10.10.10:FF:000009">
    <property type="entry name" value="LexA repressor"/>
    <property type="match status" value="1"/>
</dbReference>
<dbReference type="FunFam" id="2.10.109.10:FF:000001">
    <property type="entry name" value="LexA repressor"/>
    <property type="match status" value="1"/>
</dbReference>
<dbReference type="Gene3D" id="2.10.109.10">
    <property type="entry name" value="Umud Fragment, subunit A"/>
    <property type="match status" value="1"/>
</dbReference>
<dbReference type="Gene3D" id="1.10.10.10">
    <property type="entry name" value="Winged helix-like DNA-binding domain superfamily/Winged helix DNA-binding domain"/>
    <property type="match status" value="1"/>
</dbReference>
<dbReference type="HAMAP" id="MF_00015">
    <property type="entry name" value="LexA"/>
    <property type="match status" value="1"/>
</dbReference>
<dbReference type="InterPro" id="IPR011991">
    <property type="entry name" value="ArsR-like_HTH"/>
</dbReference>
<dbReference type="InterPro" id="IPR006200">
    <property type="entry name" value="LexA"/>
</dbReference>
<dbReference type="InterPro" id="IPR039418">
    <property type="entry name" value="LexA-like"/>
</dbReference>
<dbReference type="InterPro" id="IPR036286">
    <property type="entry name" value="LexA/Signal_pep-like_sf"/>
</dbReference>
<dbReference type="InterPro" id="IPR006199">
    <property type="entry name" value="LexA_DNA-bd_dom"/>
</dbReference>
<dbReference type="InterPro" id="IPR050077">
    <property type="entry name" value="LexA_repressor"/>
</dbReference>
<dbReference type="InterPro" id="IPR006197">
    <property type="entry name" value="Peptidase_S24_LexA"/>
</dbReference>
<dbReference type="InterPro" id="IPR015927">
    <property type="entry name" value="Peptidase_S24_S26A/B/C"/>
</dbReference>
<dbReference type="InterPro" id="IPR036388">
    <property type="entry name" value="WH-like_DNA-bd_sf"/>
</dbReference>
<dbReference type="InterPro" id="IPR036390">
    <property type="entry name" value="WH_DNA-bd_sf"/>
</dbReference>
<dbReference type="NCBIfam" id="TIGR00498">
    <property type="entry name" value="lexA"/>
    <property type="match status" value="1"/>
</dbReference>
<dbReference type="PANTHER" id="PTHR33516">
    <property type="entry name" value="LEXA REPRESSOR"/>
    <property type="match status" value="1"/>
</dbReference>
<dbReference type="PANTHER" id="PTHR33516:SF2">
    <property type="entry name" value="LEXA REPRESSOR-RELATED"/>
    <property type="match status" value="1"/>
</dbReference>
<dbReference type="Pfam" id="PF01726">
    <property type="entry name" value="LexA_DNA_bind"/>
    <property type="match status" value="1"/>
</dbReference>
<dbReference type="Pfam" id="PF00717">
    <property type="entry name" value="Peptidase_S24"/>
    <property type="match status" value="1"/>
</dbReference>
<dbReference type="PRINTS" id="PR00726">
    <property type="entry name" value="LEXASERPTASE"/>
</dbReference>
<dbReference type="SUPFAM" id="SSF51306">
    <property type="entry name" value="LexA/Signal peptidase"/>
    <property type="match status" value="1"/>
</dbReference>
<dbReference type="SUPFAM" id="SSF46785">
    <property type="entry name" value="Winged helix' DNA-binding domain"/>
    <property type="match status" value="1"/>
</dbReference>
<accession>A6QGP1</accession>
<comment type="function">
    <text evidence="1">Represses a number of genes involved in the response to DNA damage (SOS response), including recA and lexA. In the presence of single-stranded DNA, RecA interacts with LexA causing an autocatalytic cleavage which disrupts the DNA-binding part of LexA, leading to derepression of the SOS regulon and eventually DNA repair.</text>
</comment>
<comment type="catalytic activity">
    <reaction evidence="1">
        <text>Hydrolysis of Ala-|-Gly bond in repressor LexA.</text>
        <dbReference type="EC" id="3.4.21.88"/>
    </reaction>
</comment>
<comment type="subunit">
    <text evidence="1">Homodimer.</text>
</comment>
<comment type="similarity">
    <text evidence="1">Belongs to the peptidase S24 family.</text>
</comment>
<protein>
    <recommendedName>
        <fullName evidence="1">LexA repressor</fullName>
        <ecNumber evidence="1">3.4.21.88</ecNumber>
    </recommendedName>
</protein>
<proteinExistence type="inferred from homology"/>
<name>LEXA_STAAE</name>
<sequence>MRELTKRQSEIYNYIKQVVQTKGYPPSVREIGEAVGLASSFTVHGHLSRLEEKGYIEGDPTKPRAIEIVSDQTNDNINMEETIHVPVIGKVTAGVPITAVENIEEYFPLPEHLTSTHNSDIFILNVVGDSMIEAGILDGDKVIVRSQTIAENGDIIVAMTEEDEATVKRFYKEKNRYRLQPENSTMEPIYLDNVAVIGKVIGLYREM</sequence>
<keyword id="KW-0068">Autocatalytic cleavage</keyword>
<keyword id="KW-0227">DNA damage</keyword>
<keyword id="KW-0234">DNA repair</keyword>
<keyword id="KW-0235">DNA replication</keyword>
<keyword id="KW-0238">DNA-binding</keyword>
<keyword id="KW-0378">Hydrolase</keyword>
<keyword id="KW-0678">Repressor</keyword>
<keyword id="KW-0742">SOS response</keyword>
<keyword id="KW-0804">Transcription</keyword>
<keyword id="KW-0805">Transcription regulation</keyword>
<organism>
    <name type="scientific">Staphylococcus aureus (strain Newman)</name>
    <dbReference type="NCBI Taxonomy" id="426430"/>
    <lineage>
        <taxon>Bacteria</taxon>
        <taxon>Bacillati</taxon>
        <taxon>Bacillota</taxon>
        <taxon>Bacilli</taxon>
        <taxon>Bacillales</taxon>
        <taxon>Staphylococcaceae</taxon>
        <taxon>Staphylococcus</taxon>
    </lineage>
</organism>